<keyword id="KW-0067">ATP-binding</keyword>
<keyword id="KW-0436">Ligase</keyword>
<keyword id="KW-0479">Metal-binding</keyword>
<keyword id="KW-0547">Nucleotide-binding</keyword>
<keyword id="KW-0671">Queuosine biosynthesis</keyword>
<keyword id="KW-0862">Zinc</keyword>
<name>QUEC_YERPB</name>
<comment type="function">
    <text evidence="1">Catalyzes the ATP-dependent conversion of 7-carboxy-7-deazaguanine (CDG) to 7-cyano-7-deazaguanine (preQ(0)).</text>
</comment>
<comment type="catalytic activity">
    <reaction evidence="1">
        <text>7-carboxy-7-deazaguanine + NH4(+) + ATP = 7-cyano-7-deazaguanine + ADP + phosphate + H2O + H(+)</text>
        <dbReference type="Rhea" id="RHEA:27982"/>
        <dbReference type="ChEBI" id="CHEBI:15377"/>
        <dbReference type="ChEBI" id="CHEBI:15378"/>
        <dbReference type="ChEBI" id="CHEBI:28938"/>
        <dbReference type="ChEBI" id="CHEBI:30616"/>
        <dbReference type="ChEBI" id="CHEBI:43474"/>
        <dbReference type="ChEBI" id="CHEBI:45075"/>
        <dbReference type="ChEBI" id="CHEBI:61036"/>
        <dbReference type="ChEBI" id="CHEBI:456216"/>
        <dbReference type="EC" id="6.3.4.20"/>
    </reaction>
</comment>
<comment type="cofactor">
    <cofactor evidence="1">
        <name>Zn(2+)</name>
        <dbReference type="ChEBI" id="CHEBI:29105"/>
    </cofactor>
    <text evidence="1">Binds 1 zinc ion per subunit.</text>
</comment>
<comment type="pathway">
    <text evidence="1">Purine metabolism; 7-cyano-7-deazaguanine biosynthesis.</text>
</comment>
<comment type="similarity">
    <text evidence="1">Belongs to the QueC family.</text>
</comment>
<protein>
    <recommendedName>
        <fullName evidence="1">7-cyano-7-deazaguanine synthase</fullName>
        <ecNumber evidence="1">6.3.4.20</ecNumber>
    </recommendedName>
    <alternativeName>
        <fullName evidence="1">7-cyano-7-carbaguanine synthase</fullName>
    </alternativeName>
    <alternativeName>
        <fullName evidence="1">PreQ(0) synthase</fullName>
    </alternativeName>
    <alternativeName>
        <fullName evidence="1">Queuosine biosynthesis protein QueC</fullName>
    </alternativeName>
</protein>
<evidence type="ECO:0000255" key="1">
    <source>
        <dbReference type="HAMAP-Rule" id="MF_01633"/>
    </source>
</evidence>
<proteinExistence type="inferred from homology"/>
<gene>
    <name evidence="1" type="primary">queC</name>
    <name type="ordered locus">YPTS_1007</name>
</gene>
<reference key="1">
    <citation type="submission" date="2008-04" db="EMBL/GenBank/DDBJ databases">
        <title>Complete sequence of Yersinia pseudotuberculosis PB1/+.</title>
        <authorList>
            <person name="Copeland A."/>
            <person name="Lucas S."/>
            <person name="Lapidus A."/>
            <person name="Glavina del Rio T."/>
            <person name="Dalin E."/>
            <person name="Tice H."/>
            <person name="Bruce D."/>
            <person name="Goodwin L."/>
            <person name="Pitluck S."/>
            <person name="Munk A.C."/>
            <person name="Brettin T."/>
            <person name="Detter J.C."/>
            <person name="Han C."/>
            <person name="Tapia R."/>
            <person name="Schmutz J."/>
            <person name="Larimer F."/>
            <person name="Land M."/>
            <person name="Hauser L."/>
            <person name="Challacombe J.F."/>
            <person name="Green L."/>
            <person name="Lindler L.E."/>
            <person name="Nikolich M.P."/>
            <person name="Richardson P."/>
        </authorList>
    </citation>
    <scope>NUCLEOTIDE SEQUENCE [LARGE SCALE GENOMIC DNA]</scope>
    <source>
        <strain>PB1/+</strain>
    </source>
</reference>
<organism>
    <name type="scientific">Yersinia pseudotuberculosis serotype IB (strain PB1/+)</name>
    <dbReference type="NCBI Taxonomy" id="502801"/>
    <lineage>
        <taxon>Bacteria</taxon>
        <taxon>Pseudomonadati</taxon>
        <taxon>Pseudomonadota</taxon>
        <taxon>Gammaproteobacteria</taxon>
        <taxon>Enterobacterales</taxon>
        <taxon>Yersiniaceae</taxon>
        <taxon>Yersinia</taxon>
    </lineage>
</organism>
<sequence>MKRAVVVFSGGQDSTTCLIQALQQYDEVHCITFDYGQRHRTEIDVARELALQLGATAHKVLDVGMLNELAVSSLTRDSIPVPSYDANADGALPSTFVPGRNILFLTLASIYAYQVQAQAVITGVCETDFSGYPDCRDEFIKALNHAIDLGIGRDIAFITPLMWLDKAETWALADYYQQLDLIRHHTLTCYNGIKGDGCGQCAACHLRAKGLASYMANKQQVILNLKQKVGLA</sequence>
<dbReference type="EC" id="6.3.4.20" evidence="1"/>
<dbReference type="EMBL" id="CP001048">
    <property type="protein sequence ID" value="ACC87988.1"/>
    <property type="molecule type" value="Genomic_DNA"/>
</dbReference>
<dbReference type="RefSeq" id="WP_002208635.1">
    <property type="nucleotide sequence ID" value="NZ_CP009780.1"/>
</dbReference>
<dbReference type="SMR" id="B2K6W4"/>
<dbReference type="GeneID" id="57975561"/>
<dbReference type="KEGG" id="ypb:YPTS_1007"/>
<dbReference type="PATRIC" id="fig|502801.10.peg.349"/>
<dbReference type="UniPathway" id="UPA00391"/>
<dbReference type="GO" id="GO:0005524">
    <property type="term" value="F:ATP binding"/>
    <property type="evidence" value="ECO:0007669"/>
    <property type="project" value="UniProtKB-UniRule"/>
</dbReference>
<dbReference type="GO" id="GO:0016879">
    <property type="term" value="F:ligase activity, forming carbon-nitrogen bonds"/>
    <property type="evidence" value="ECO:0007669"/>
    <property type="project" value="UniProtKB-UniRule"/>
</dbReference>
<dbReference type="GO" id="GO:0008270">
    <property type="term" value="F:zinc ion binding"/>
    <property type="evidence" value="ECO:0007669"/>
    <property type="project" value="UniProtKB-UniRule"/>
</dbReference>
<dbReference type="GO" id="GO:0008616">
    <property type="term" value="P:queuosine biosynthetic process"/>
    <property type="evidence" value="ECO:0007669"/>
    <property type="project" value="UniProtKB-UniRule"/>
</dbReference>
<dbReference type="CDD" id="cd01995">
    <property type="entry name" value="QueC-like"/>
    <property type="match status" value="1"/>
</dbReference>
<dbReference type="FunFam" id="3.40.50.620:FF:000017">
    <property type="entry name" value="7-cyano-7-deazaguanine synthase"/>
    <property type="match status" value="1"/>
</dbReference>
<dbReference type="Gene3D" id="3.40.50.620">
    <property type="entry name" value="HUPs"/>
    <property type="match status" value="1"/>
</dbReference>
<dbReference type="HAMAP" id="MF_01633">
    <property type="entry name" value="QueC"/>
    <property type="match status" value="1"/>
</dbReference>
<dbReference type="InterPro" id="IPR018317">
    <property type="entry name" value="QueC"/>
</dbReference>
<dbReference type="InterPro" id="IPR014729">
    <property type="entry name" value="Rossmann-like_a/b/a_fold"/>
</dbReference>
<dbReference type="NCBIfam" id="TIGR00364">
    <property type="entry name" value="7-cyano-7-deazaguanine synthase QueC"/>
    <property type="match status" value="1"/>
</dbReference>
<dbReference type="NCBIfam" id="NF008317">
    <property type="entry name" value="PRK11106.1"/>
    <property type="match status" value="1"/>
</dbReference>
<dbReference type="PANTHER" id="PTHR42914">
    <property type="entry name" value="7-CYANO-7-DEAZAGUANINE SYNTHASE"/>
    <property type="match status" value="1"/>
</dbReference>
<dbReference type="PANTHER" id="PTHR42914:SF1">
    <property type="entry name" value="7-CYANO-7-DEAZAGUANINE SYNTHASE"/>
    <property type="match status" value="1"/>
</dbReference>
<dbReference type="Pfam" id="PF06508">
    <property type="entry name" value="QueC"/>
    <property type="match status" value="1"/>
</dbReference>
<dbReference type="PIRSF" id="PIRSF006293">
    <property type="entry name" value="ExsB"/>
    <property type="match status" value="1"/>
</dbReference>
<dbReference type="SUPFAM" id="SSF52402">
    <property type="entry name" value="Adenine nucleotide alpha hydrolases-like"/>
    <property type="match status" value="1"/>
</dbReference>
<accession>B2K6W4</accession>
<feature type="chain" id="PRO_1000186648" description="7-cyano-7-deazaguanine synthase">
    <location>
        <begin position="1"/>
        <end position="232"/>
    </location>
</feature>
<feature type="binding site" evidence="1">
    <location>
        <begin position="8"/>
        <end position="18"/>
    </location>
    <ligand>
        <name>ATP</name>
        <dbReference type="ChEBI" id="CHEBI:30616"/>
    </ligand>
</feature>
<feature type="binding site" evidence="1">
    <location>
        <position position="189"/>
    </location>
    <ligand>
        <name>Zn(2+)</name>
        <dbReference type="ChEBI" id="CHEBI:29105"/>
    </ligand>
</feature>
<feature type="binding site" evidence="1">
    <location>
        <position position="198"/>
    </location>
    <ligand>
        <name>Zn(2+)</name>
        <dbReference type="ChEBI" id="CHEBI:29105"/>
    </ligand>
</feature>
<feature type="binding site" evidence="1">
    <location>
        <position position="201"/>
    </location>
    <ligand>
        <name>Zn(2+)</name>
        <dbReference type="ChEBI" id="CHEBI:29105"/>
    </ligand>
</feature>
<feature type="binding site" evidence="1">
    <location>
        <position position="204"/>
    </location>
    <ligand>
        <name>Zn(2+)</name>
        <dbReference type="ChEBI" id="CHEBI:29105"/>
    </ligand>
</feature>